<sequence>MTLGQFGGLFCIYLIAVIFILTLTYQEFRRVKFNFNVLFSMLYLLTFYFGFPLTCMLVFQFGVAVVPVEYLLYAMLSATAFYGIYYVTYKTRLRQPRSQPRTPIFTMNRVETNLTWVLLALVAVGTVGIFFMQNGFLLFKLDSYSKIFSSDVSGVALKRFFYFFIPAMLVVYFLKQDRRAWFFFLASTVAFGILTYVIVGGTRANIIIAFSLFLFIGIVRGWITLWMLAAAGVFGIVGMFWLALKRYGLDVNGAEAFYTFLYLTRDTFSPWENLGLLLQNYDKIDFQGLAPIVRDFYVFIPSALWPERPDLVLNTANYFTWDVLDNHSGLAISPTLIGSLVVMGGVLFIPLGAIVVGLIIKWFDWLYEQGKAESNRYKAAILQSFCFGAVFNIIVLAREGLDSFVSRVVFFCVIFGACLVLAKLLYWLFDTAGLIKRQGIKSNRLSTPNAGNQL</sequence>
<comment type="function">
    <text evidence="1">Probably involved in the polymerization of enterobacterial common antigen (ECA) trisaccharide repeat units.</text>
</comment>
<comment type="pathway">
    <text evidence="1">Bacterial outer membrane biogenesis; enterobacterial common antigen biosynthesis.</text>
</comment>
<comment type="subunit">
    <text evidence="1">Probably part of a complex composed of WzxE, WzyE and WzzE.</text>
</comment>
<comment type="subcellular location">
    <subcellularLocation>
        <location evidence="1">Cell inner membrane</location>
        <topology evidence="1">Multi-pass membrane protein</topology>
    </subcellularLocation>
</comment>
<comment type="similarity">
    <text evidence="1">Belongs to the WzyE family.</text>
</comment>
<accession>B1JPZ8</accession>
<protein>
    <recommendedName>
        <fullName evidence="1">Probable ECA polymerase</fullName>
    </recommendedName>
</protein>
<reference key="1">
    <citation type="submission" date="2008-02" db="EMBL/GenBank/DDBJ databases">
        <title>Complete sequence of Yersinia pseudotuberculosis YPIII.</title>
        <authorList>
            <consortium name="US DOE Joint Genome Institute"/>
            <person name="Copeland A."/>
            <person name="Lucas S."/>
            <person name="Lapidus A."/>
            <person name="Glavina del Rio T."/>
            <person name="Dalin E."/>
            <person name="Tice H."/>
            <person name="Bruce D."/>
            <person name="Goodwin L."/>
            <person name="Pitluck S."/>
            <person name="Munk A.C."/>
            <person name="Brettin T."/>
            <person name="Detter J.C."/>
            <person name="Han C."/>
            <person name="Tapia R."/>
            <person name="Schmutz J."/>
            <person name="Larimer F."/>
            <person name="Land M."/>
            <person name="Hauser L."/>
            <person name="Challacombe J.F."/>
            <person name="Green L."/>
            <person name="Lindler L.E."/>
            <person name="Nikolich M.P."/>
            <person name="Richardson P."/>
        </authorList>
    </citation>
    <scope>NUCLEOTIDE SEQUENCE [LARGE SCALE GENOMIC DNA]</scope>
    <source>
        <strain>YPIII</strain>
    </source>
</reference>
<organism>
    <name type="scientific">Yersinia pseudotuberculosis serotype O:3 (strain YPIII)</name>
    <dbReference type="NCBI Taxonomy" id="502800"/>
    <lineage>
        <taxon>Bacteria</taxon>
        <taxon>Pseudomonadati</taxon>
        <taxon>Pseudomonadota</taxon>
        <taxon>Gammaproteobacteria</taxon>
        <taxon>Enterobacterales</taxon>
        <taxon>Yersiniaceae</taxon>
        <taxon>Yersinia</taxon>
    </lineage>
</organism>
<name>WZYE_YERPY</name>
<keyword id="KW-0997">Cell inner membrane</keyword>
<keyword id="KW-1003">Cell membrane</keyword>
<keyword id="KW-0472">Membrane</keyword>
<keyword id="KW-0812">Transmembrane</keyword>
<keyword id="KW-1133">Transmembrane helix</keyword>
<gene>
    <name evidence="1" type="primary">wzyE</name>
    <name type="ordered locus">YPK_4023</name>
</gene>
<dbReference type="EMBL" id="CP000950">
    <property type="protein sequence ID" value="ACA70285.1"/>
    <property type="molecule type" value="Genomic_DNA"/>
</dbReference>
<dbReference type="RefSeq" id="WP_002211978.1">
    <property type="nucleotide sequence ID" value="NZ_CP009792.1"/>
</dbReference>
<dbReference type="GeneID" id="57974847"/>
<dbReference type="KEGG" id="ypy:YPK_4023"/>
<dbReference type="PATRIC" id="fig|502800.11.peg.372"/>
<dbReference type="UniPathway" id="UPA00566"/>
<dbReference type="GO" id="GO:0005886">
    <property type="term" value="C:plasma membrane"/>
    <property type="evidence" value="ECO:0007669"/>
    <property type="project" value="UniProtKB-SubCell"/>
</dbReference>
<dbReference type="GO" id="GO:0009246">
    <property type="term" value="P:enterobacterial common antigen biosynthetic process"/>
    <property type="evidence" value="ECO:0007669"/>
    <property type="project" value="UniProtKB-UniRule"/>
</dbReference>
<dbReference type="HAMAP" id="MF_01003">
    <property type="entry name" value="WzyE"/>
    <property type="match status" value="1"/>
</dbReference>
<dbReference type="InterPro" id="IPR010691">
    <property type="entry name" value="WzyE"/>
</dbReference>
<dbReference type="NCBIfam" id="NF002820">
    <property type="entry name" value="PRK02975.1"/>
    <property type="match status" value="1"/>
</dbReference>
<dbReference type="Pfam" id="PF06899">
    <property type="entry name" value="WzyE"/>
    <property type="match status" value="1"/>
</dbReference>
<feature type="chain" id="PRO_1000200223" description="Probable ECA polymerase">
    <location>
        <begin position="1"/>
        <end position="454"/>
    </location>
</feature>
<feature type="transmembrane region" description="Helical" evidence="1">
    <location>
        <begin position="3"/>
        <end position="23"/>
    </location>
</feature>
<feature type="transmembrane region" description="Helical" evidence="1">
    <location>
        <begin position="39"/>
        <end position="59"/>
    </location>
</feature>
<feature type="transmembrane region" description="Helical" evidence="1">
    <location>
        <begin position="61"/>
        <end position="81"/>
    </location>
</feature>
<feature type="transmembrane region" description="Helical" evidence="1">
    <location>
        <begin position="119"/>
        <end position="139"/>
    </location>
</feature>
<feature type="transmembrane region" description="Helical" evidence="1">
    <location>
        <begin position="154"/>
        <end position="174"/>
    </location>
</feature>
<feature type="transmembrane region" description="Helical" evidence="1">
    <location>
        <begin position="180"/>
        <end position="200"/>
    </location>
</feature>
<feature type="transmembrane region" description="Helical" evidence="1">
    <location>
        <begin position="201"/>
        <end position="221"/>
    </location>
</feature>
<feature type="transmembrane region" description="Helical" evidence="1">
    <location>
        <begin position="222"/>
        <end position="242"/>
    </location>
</feature>
<feature type="transmembrane region" description="Helical" evidence="1">
    <location>
        <begin position="340"/>
        <end position="360"/>
    </location>
</feature>
<feature type="transmembrane region" description="Helical" evidence="1">
    <location>
        <begin position="377"/>
        <end position="397"/>
    </location>
</feature>
<feature type="transmembrane region" description="Helical" evidence="1">
    <location>
        <begin position="409"/>
        <end position="429"/>
    </location>
</feature>
<proteinExistence type="inferred from homology"/>
<evidence type="ECO:0000255" key="1">
    <source>
        <dbReference type="HAMAP-Rule" id="MF_01003"/>
    </source>
</evidence>